<dbReference type="EMBL" id="AY034074">
    <property type="protein sequence ID" value="AAK54443.1"/>
    <property type="molecule type" value="mRNA"/>
</dbReference>
<dbReference type="EMBL" id="AK000381">
    <property type="protein sequence ID" value="BAA91128.1"/>
    <property type="molecule type" value="mRNA"/>
</dbReference>
<dbReference type="EMBL" id="CH471136">
    <property type="protein sequence ID" value="EAW99285.1"/>
    <property type="molecule type" value="Genomic_DNA"/>
</dbReference>
<dbReference type="EMBL" id="CH471136">
    <property type="protein sequence ID" value="EAW99286.1"/>
    <property type="molecule type" value="Genomic_DNA"/>
</dbReference>
<dbReference type="EMBL" id="BC002497">
    <property type="protein sequence ID" value="AAH02497.1"/>
    <property type="molecule type" value="mRNA"/>
</dbReference>
<dbReference type="EMBL" id="BC007270">
    <property type="protein sequence ID" value="AAH07270.1"/>
    <property type="molecule type" value="mRNA"/>
</dbReference>
<dbReference type="CCDS" id="CCDS10274.1"/>
<dbReference type="RefSeq" id="NP_060263.2">
    <property type="nucleotide sequence ID" value="NM_017793.3"/>
</dbReference>
<dbReference type="PDB" id="6AHR">
    <property type="method" value="EM"/>
    <property type="resolution" value="3.92 A"/>
    <property type="chains" value="F=1-199"/>
</dbReference>
<dbReference type="PDB" id="6AHU">
    <property type="method" value="EM"/>
    <property type="resolution" value="3.66 A"/>
    <property type="chains" value="F=1-199"/>
</dbReference>
<dbReference type="PDB" id="6CWX">
    <property type="method" value="X-ray"/>
    <property type="resolution" value="2.25 A"/>
    <property type="chains" value="B=1-199"/>
</dbReference>
<dbReference type="PDB" id="6LT7">
    <property type="method" value="X-ray"/>
    <property type="resolution" value="2.70 A"/>
    <property type="chains" value="B/E=2-199"/>
</dbReference>
<dbReference type="PDBsum" id="6AHR"/>
<dbReference type="PDBsum" id="6AHU"/>
<dbReference type="PDBsum" id="6CWX"/>
<dbReference type="PDBsum" id="6LT7"/>
<dbReference type="EMDB" id="EMD-9626"/>
<dbReference type="EMDB" id="EMD-9627"/>
<dbReference type="SMR" id="Q9BUL9"/>
<dbReference type="BioGRID" id="120255">
    <property type="interactions" value="59"/>
</dbReference>
<dbReference type="ComplexPortal" id="CPX-2876">
    <property type="entry name" value="Ribonuclease MRP complex"/>
</dbReference>
<dbReference type="ComplexPortal" id="CPX-2877">
    <property type="entry name" value="Nucleolar ribonuclease P complex"/>
</dbReference>
<dbReference type="CORUM" id="Q9BUL9"/>
<dbReference type="FunCoup" id="Q9BUL9">
    <property type="interactions" value="209"/>
</dbReference>
<dbReference type="IntAct" id="Q9BUL9">
    <property type="interactions" value="54"/>
</dbReference>
<dbReference type="STRING" id="9606.ENSP00000317691"/>
<dbReference type="GlyGen" id="Q9BUL9">
    <property type="glycosylation" value="2 sites, 1 O-linked glycan (1 site)"/>
</dbReference>
<dbReference type="iPTMnet" id="Q9BUL9"/>
<dbReference type="PhosphoSitePlus" id="Q9BUL9"/>
<dbReference type="BioMuta" id="RPP25"/>
<dbReference type="DMDM" id="74733233"/>
<dbReference type="jPOST" id="Q9BUL9"/>
<dbReference type="MassIVE" id="Q9BUL9"/>
<dbReference type="PaxDb" id="9606-ENSP00000317691"/>
<dbReference type="PeptideAtlas" id="Q9BUL9"/>
<dbReference type="ProteomicsDB" id="79109"/>
<dbReference type="Pumba" id="Q9BUL9"/>
<dbReference type="Antibodypedia" id="50450">
    <property type="antibodies" value="92 antibodies from 23 providers"/>
</dbReference>
<dbReference type="DNASU" id="54913"/>
<dbReference type="Ensembl" id="ENST00000322177.6">
    <property type="protein sequence ID" value="ENSP00000317691.6"/>
    <property type="gene ID" value="ENSG00000178718.7"/>
</dbReference>
<dbReference type="GeneID" id="54913"/>
<dbReference type="KEGG" id="hsa:54913"/>
<dbReference type="MANE-Select" id="ENST00000322177.6">
    <property type="protein sequence ID" value="ENSP00000317691.6"/>
    <property type="RefSeq nucleotide sequence ID" value="NM_017793.3"/>
    <property type="RefSeq protein sequence ID" value="NP_060263.2"/>
</dbReference>
<dbReference type="UCSC" id="uc002azj.2">
    <property type="organism name" value="human"/>
</dbReference>
<dbReference type="AGR" id="HGNC:30361"/>
<dbReference type="CTD" id="54913"/>
<dbReference type="DisGeNET" id="54913"/>
<dbReference type="GeneCards" id="RPP25"/>
<dbReference type="HGNC" id="HGNC:30361">
    <property type="gene designation" value="RPP25"/>
</dbReference>
<dbReference type="HPA" id="ENSG00000178718">
    <property type="expression patterns" value="Low tissue specificity"/>
</dbReference>
<dbReference type="MIM" id="619235">
    <property type="type" value="gene"/>
</dbReference>
<dbReference type="neXtProt" id="NX_Q9BUL9"/>
<dbReference type="OpenTargets" id="ENSG00000178718"/>
<dbReference type="PharmGKB" id="PA134990737"/>
<dbReference type="VEuPathDB" id="HostDB:ENSG00000178718"/>
<dbReference type="eggNOG" id="KOG2567">
    <property type="taxonomic scope" value="Eukaryota"/>
</dbReference>
<dbReference type="GeneTree" id="ENSGT00390000002564"/>
<dbReference type="HOGENOM" id="CLU_096311_0_0_1"/>
<dbReference type="InParanoid" id="Q9BUL9"/>
<dbReference type="OMA" id="WENKDPQ"/>
<dbReference type="OrthoDB" id="424402at2759"/>
<dbReference type="PAN-GO" id="Q9BUL9">
    <property type="GO annotations" value="3 GO annotations based on evolutionary models"/>
</dbReference>
<dbReference type="PhylomeDB" id="Q9BUL9"/>
<dbReference type="TreeFam" id="TF325688"/>
<dbReference type="BRENDA" id="3.1.26.5">
    <property type="organism ID" value="2681"/>
</dbReference>
<dbReference type="PathwayCommons" id="Q9BUL9"/>
<dbReference type="Reactome" id="R-HSA-6784531">
    <property type="pathway name" value="tRNA processing in the nucleus"/>
</dbReference>
<dbReference type="Reactome" id="R-HSA-6791226">
    <property type="pathway name" value="Major pathway of rRNA processing in the nucleolus and cytosol"/>
</dbReference>
<dbReference type="SignaLink" id="Q9BUL9"/>
<dbReference type="BioGRID-ORCS" id="54913">
    <property type="hits" value="22 hits in 1156 CRISPR screens"/>
</dbReference>
<dbReference type="CD-CODE" id="91857CE7">
    <property type="entry name" value="Nucleolus"/>
</dbReference>
<dbReference type="GenomeRNAi" id="54913"/>
<dbReference type="Pharos" id="Q9BUL9">
    <property type="development level" value="Tbio"/>
</dbReference>
<dbReference type="PRO" id="PR:Q9BUL9"/>
<dbReference type="Proteomes" id="UP000005640">
    <property type="component" value="Chromosome 15"/>
</dbReference>
<dbReference type="RNAct" id="Q9BUL9">
    <property type="molecule type" value="protein"/>
</dbReference>
<dbReference type="Bgee" id="ENSG00000178718">
    <property type="expression patterns" value="Expressed in vena cava and 179 other cell types or tissues"/>
</dbReference>
<dbReference type="GO" id="GO:0034451">
    <property type="term" value="C:centriolar satellite"/>
    <property type="evidence" value="ECO:0000314"/>
    <property type="project" value="HPA"/>
</dbReference>
<dbReference type="GO" id="GO:0030681">
    <property type="term" value="C:multimeric ribonuclease P complex"/>
    <property type="evidence" value="ECO:0000314"/>
    <property type="project" value="UniProtKB"/>
</dbReference>
<dbReference type="GO" id="GO:0005730">
    <property type="term" value="C:nucleolus"/>
    <property type="evidence" value="ECO:0007669"/>
    <property type="project" value="UniProtKB-SubCell"/>
</dbReference>
<dbReference type="GO" id="GO:0005654">
    <property type="term" value="C:nucleoplasm"/>
    <property type="evidence" value="ECO:0000314"/>
    <property type="project" value="HPA"/>
</dbReference>
<dbReference type="GO" id="GO:0000172">
    <property type="term" value="C:ribonuclease MRP complex"/>
    <property type="evidence" value="ECO:0000314"/>
    <property type="project" value="FlyBase"/>
</dbReference>
<dbReference type="GO" id="GO:0004526">
    <property type="term" value="F:ribonuclease P activity"/>
    <property type="evidence" value="ECO:0007669"/>
    <property type="project" value="UniProtKB-EC"/>
</dbReference>
<dbReference type="GO" id="GO:0033204">
    <property type="term" value="F:ribonuclease P RNA binding"/>
    <property type="evidence" value="ECO:0000314"/>
    <property type="project" value="UniProtKB"/>
</dbReference>
<dbReference type="GO" id="GO:0003723">
    <property type="term" value="F:RNA binding"/>
    <property type="evidence" value="ECO:0007005"/>
    <property type="project" value="UniProtKB"/>
</dbReference>
<dbReference type="GO" id="GO:0006364">
    <property type="term" value="P:rRNA processing"/>
    <property type="evidence" value="ECO:0007669"/>
    <property type="project" value="UniProtKB-KW"/>
</dbReference>
<dbReference type="GO" id="GO:0001682">
    <property type="term" value="P:tRNA 5'-leader removal"/>
    <property type="evidence" value="ECO:0000314"/>
    <property type="project" value="UniProtKB"/>
</dbReference>
<dbReference type="DisProt" id="DP02616"/>
<dbReference type="FunFam" id="3.30.110.20:FF:000006">
    <property type="entry name" value="Ribonuclease P protein subunit p25"/>
    <property type="match status" value="1"/>
</dbReference>
<dbReference type="Gene3D" id="3.30.110.20">
    <property type="entry name" value="Alba-like domain"/>
    <property type="match status" value="1"/>
</dbReference>
<dbReference type="InterPro" id="IPR036882">
    <property type="entry name" value="Alba-like_dom_sf"/>
</dbReference>
<dbReference type="InterPro" id="IPR051958">
    <property type="entry name" value="Alba-like_NAB"/>
</dbReference>
<dbReference type="InterPro" id="IPR002775">
    <property type="entry name" value="DNA/RNA-bd_Alba-like"/>
</dbReference>
<dbReference type="PANTHER" id="PTHR13516:SF5">
    <property type="entry name" value="RIBONUCLEASE P PROTEIN SUBUNIT P25"/>
    <property type="match status" value="1"/>
</dbReference>
<dbReference type="PANTHER" id="PTHR13516">
    <property type="entry name" value="RIBONUCLEASE P SUBUNIT P25"/>
    <property type="match status" value="1"/>
</dbReference>
<dbReference type="Pfam" id="PF01918">
    <property type="entry name" value="Alba"/>
    <property type="match status" value="1"/>
</dbReference>
<dbReference type="SUPFAM" id="SSF82704">
    <property type="entry name" value="AlbA-like"/>
    <property type="match status" value="1"/>
</dbReference>
<organism>
    <name type="scientific">Homo sapiens</name>
    <name type="common">Human</name>
    <dbReference type="NCBI Taxonomy" id="9606"/>
    <lineage>
        <taxon>Eukaryota</taxon>
        <taxon>Metazoa</taxon>
        <taxon>Chordata</taxon>
        <taxon>Craniata</taxon>
        <taxon>Vertebrata</taxon>
        <taxon>Euteleostomi</taxon>
        <taxon>Mammalia</taxon>
        <taxon>Eutheria</taxon>
        <taxon>Euarchontoglires</taxon>
        <taxon>Primates</taxon>
        <taxon>Haplorrhini</taxon>
        <taxon>Catarrhini</taxon>
        <taxon>Hominidae</taxon>
        <taxon>Homo</taxon>
    </lineage>
</organism>
<name>RPP25_HUMAN</name>
<reference key="1">
    <citation type="journal article" date="2002" name="RNA">
        <title>Purification and characterization of Rpp25, an RNA-binding protein subunit of human ribonuclease P.</title>
        <authorList>
            <person name="Guerrier-Takada C."/>
            <person name="Eder P.S."/>
            <person name="Gopalan V."/>
            <person name="Altman S."/>
        </authorList>
    </citation>
    <scope>NUCLEOTIDE SEQUENCE [MRNA]</scope>
    <scope>FUNCTION</scope>
    <scope>SUBUNIT</scope>
    <scope>RNA-BINDING</scope>
    <scope>SUBCELLULAR LOCATION</scope>
</reference>
<reference key="2">
    <citation type="journal article" date="2004" name="Nat. Genet.">
        <title>Complete sequencing and characterization of 21,243 full-length human cDNAs.</title>
        <authorList>
            <person name="Ota T."/>
            <person name="Suzuki Y."/>
            <person name="Nishikawa T."/>
            <person name="Otsuki T."/>
            <person name="Sugiyama T."/>
            <person name="Irie R."/>
            <person name="Wakamatsu A."/>
            <person name="Hayashi K."/>
            <person name="Sato H."/>
            <person name="Nagai K."/>
            <person name="Kimura K."/>
            <person name="Makita H."/>
            <person name="Sekine M."/>
            <person name="Obayashi M."/>
            <person name="Nishi T."/>
            <person name="Shibahara T."/>
            <person name="Tanaka T."/>
            <person name="Ishii S."/>
            <person name="Yamamoto J."/>
            <person name="Saito K."/>
            <person name="Kawai Y."/>
            <person name="Isono Y."/>
            <person name="Nakamura Y."/>
            <person name="Nagahari K."/>
            <person name="Murakami K."/>
            <person name="Yasuda T."/>
            <person name="Iwayanagi T."/>
            <person name="Wagatsuma M."/>
            <person name="Shiratori A."/>
            <person name="Sudo H."/>
            <person name="Hosoiri T."/>
            <person name="Kaku Y."/>
            <person name="Kodaira H."/>
            <person name="Kondo H."/>
            <person name="Sugawara M."/>
            <person name="Takahashi M."/>
            <person name="Kanda K."/>
            <person name="Yokoi T."/>
            <person name="Furuya T."/>
            <person name="Kikkawa E."/>
            <person name="Omura Y."/>
            <person name="Abe K."/>
            <person name="Kamihara K."/>
            <person name="Katsuta N."/>
            <person name="Sato K."/>
            <person name="Tanikawa M."/>
            <person name="Yamazaki M."/>
            <person name="Ninomiya K."/>
            <person name="Ishibashi T."/>
            <person name="Yamashita H."/>
            <person name="Murakawa K."/>
            <person name="Fujimori K."/>
            <person name="Tanai H."/>
            <person name="Kimata M."/>
            <person name="Watanabe M."/>
            <person name="Hiraoka S."/>
            <person name="Chiba Y."/>
            <person name="Ishida S."/>
            <person name="Ono Y."/>
            <person name="Takiguchi S."/>
            <person name="Watanabe S."/>
            <person name="Yosida M."/>
            <person name="Hotuta T."/>
            <person name="Kusano J."/>
            <person name="Kanehori K."/>
            <person name="Takahashi-Fujii A."/>
            <person name="Hara H."/>
            <person name="Tanase T.-O."/>
            <person name="Nomura Y."/>
            <person name="Togiya S."/>
            <person name="Komai F."/>
            <person name="Hara R."/>
            <person name="Takeuchi K."/>
            <person name="Arita M."/>
            <person name="Imose N."/>
            <person name="Musashino K."/>
            <person name="Yuuki H."/>
            <person name="Oshima A."/>
            <person name="Sasaki N."/>
            <person name="Aotsuka S."/>
            <person name="Yoshikawa Y."/>
            <person name="Matsunawa H."/>
            <person name="Ichihara T."/>
            <person name="Shiohata N."/>
            <person name="Sano S."/>
            <person name="Moriya S."/>
            <person name="Momiyama H."/>
            <person name="Satoh N."/>
            <person name="Takami S."/>
            <person name="Terashima Y."/>
            <person name="Suzuki O."/>
            <person name="Nakagawa S."/>
            <person name="Senoh A."/>
            <person name="Mizoguchi H."/>
            <person name="Goto Y."/>
            <person name="Shimizu F."/>
            <person name="Wakebe H."/>
            <person name="Hishigaki H."/>
            <person name="Watanabe T."/>
            <person name="Sugiyama A."/>
            <person name="Takemoto M."/>
            <person name="Kawakami B."/>
            <person name="Yamazaki M."/>
            <person name="Watanabe K."/>
            <person name="Kumagai A."/>
            <person name="Itakura S."/>
            <person name="Fukuzumi Y."/>
            <person name="Fujimori Y."/>
            <person name="Komiyama M."/>
            <person name="Tashiro H."/>
            <person name="Tanigami A."/>
            <person name="Fujiwara T."/>
            <person name="Ono T."/>
            <person name="Yamada K."/>
            <person name="Fujii Y."/>
            <person name="Ozaki K."/>
            <person name="Hirao M."/>
            <person name="Ohmori Y."/>
            <person name="Kawabata A."/>
            <person name="Hikiji T."/>
            <person name="Kobatake N."/>
            <person name="Inagaki H."/>
            <person name="Ikema Y."/>
            <person name="Okamoto S."/>
            <person name="Okitani R."/>
            <person name="Kawakami T."/>
            <person name="Noguchi S."/>
            <person name="Itoh T."/>
            <person name="Shigeta K."/>
            <person name="Senba T."/>
            <person name="Matsumura K."/>
            <person name="Nakajima Y."/>
            <person name="Mizuno T."/>
            <person name="Morinaga M."/>
            <person name="Sasaki M."/>
            <person name="Togashi T."/>
            <person name="Oyama M."/>
            <person name="Hata H."/>
            <person name="Watanabe M."/>
            <person name="Komatsu T."/>
            <person name="Mizushima-Sugano J."/>
            <person name="Satoh T."/>
            <person name="Shirai Y."/>
            <person name="Takahashi Y."/>
            <person name="Nakagawa K."/>
            <person name="Okumura K."/>
            <person name="Nagase T."/>
            <person name="Nomura N."/>
            <person name="Kikuchi H."/>
            <person name="Masuho Y."/>
            <person name="Yamashita R."/>
            <person name="Nakai K."/>
            <person name="Yada T."/>
            <person name="Nakamura Y."/>
            <person name="Ohara O."/>
            <person name="Isogai T."/>
            <person name="Sugano S."/>
        </authorList>
    </citation>
    <scope>NUCLEOTIDE SEQUENCE [LARGE SCALE MRNA]</scope>
</reference>
<reference key="3">
    <citation type="submission" date="2005-09" db="EMBL/GenBank/DDBJ databases">
        <authorList>
            <person name="Mural R.J."/>
            <person name="Istrail S."/>
            <person name="Sutton G.G."/>
            <person name="Florea L."/>
            <person name="Halpern A.L."/>
            <person name="Mobarry C.M."/>
            <person name="Lippert R."/>
            <person name="Walenz B."/>
            <person name="Shatkay H."/>
            <person name="Dew I."/>
            <person name="Miller J.R."/>
            <person name="Flanigan M.J."/>
            <person name="Edwards N.J."/>
            <person name="Bolanos R."/>
            <person name="Fasulo D."/>
            <person name="Halldorsson B.V."/>
            <person name="Hannenhalli S."/>
            <person name="Turner R."/>
            <person name="Yooseph S."/>
            <person name="Lu F."/>
            <person name="Nusskern D.R."/>
            <person name="Shue B.C."/>
            <person name="Zheng X.H."/>
            <person name="Zhong F."/>
            <person name="Delcher A.L."/>
            <person name="Huson D.H."/>
            <person name="Kravitz S.A."/>
            <person name="Mouchard L."/>
            <person name="Reinert K."/>
            <person name="Remington K.A."/>
            <person name="Clark A.G."/>
            <person name="Waterman M.S."/>
            <person name="Eichler E.E."/>
            <person name="Adams M.D."/>
            <person name="Hunkapiller M.W."/>
            <person name="Myers E.W."/>
            <person name="Venter J.C."/>
        </authorList>
    </citation>
    <scope>NUCLEOTIDE SEQUENCE [LARGE SCALE GENOMIC DNA]</scope>
</reference>
<reference key="4">
    <citation type="journal article" date="2004" name="Genome Res.">
        <title>The status, quality, and expansion of the NIH full-length cDNA project: the Mammalian Gene Collection (MGC).</title>
        <authorList>
            <consortium name="The MGC Project Team"/>
        </authorList>
    </citation>
    <scope>NUCLEOTIDE SEQUENCE [LARGE SCALE MRNA]</scope>
    <source>
        <tissue>Brain</tissue>
        <tissue>Skin</tissue>
    </source>
</reference>
<reference key="5">
    <citation type="journal article" date="2004" name="Nucleic Acids Res.">
        <title>Mutual interactions between subunits of the human RNase MRP ribonucleoprotein complex.</title>
        <authorList>
            <person name="Welting T.J."/>
            <person name="van Venrooij W.J."/>
            <person name="Pruijn G.J."/>
        </authorList>
    </citation>
    <scope>IDENTIFICATION IN THE RNASE P AND RNASE MRP COMPLEXES</scope>
    <scope>SUBUNIT</scope>
</reference>
<reference key="6">
    <citation type="journal article" date="2006" name="RNA">
        <title>Differential association of protein subunits with the human RNase MRP and RNase P complexes.</title>
        <authorList>
            <person name="Welting T.J."/>
            <person name="Kikkert B.J."/>
            <person name="van Venrooij W.J."/>
            <person name="Pruijn G.J."/>
        </authorList>
    </citation>
    <scope>IDENTIFICATION IN RNASE P COMPLEX</scope>
    <scope>SUBUNIT</scope>
</reference>
<reference key="7">
    <citation type="journal article" date="2008" name="Proc. Natl. Acad. Sci. U.S.A.">
        <title>A quantitative atlas of mitotic phosphorylation.</title>
        <authorList>
            <person name="Dephoure N."/>
            <person name="Zhou C."/>
            <person name="Villen J."/>
            <person name="Beausoleil S.A."/>
            <person name="Bakalarski C.E."/>
            <person name="Elledge S.J."/>
            <person name="Gygi S.P."/>
        </authorList>
    </citation>
    <scope>PHOSPHORYLATION [LARGE SCALE ANALYSIS] AT SER-172</scope>
    <scope>IDENTIFICATION BY MASS SPECTROMETRY [LARGE SCALE ANALYSIS]</scope>
    <source>
        <tissue>Cervix carcinoma</tissue>
    </source>
</reference>
<reference key="8">
    <citation type="journal article" date="2010" name="Nucleic Acids Res.">
        <title>Heterodimerization of the human RNase P/MRP subunits Rpp20 and Rpp25 is a prerequisite for interaction with the P3 arm of RNase MRP RNA.</title>
        <authorList>
            <person name="Hands-Taylor K.L."/>
            <person name="Martino L."/>
            <person name="Tata R."/>
            <person name="Babon J.J."/>
            <person name="Bui T.T."/>
            <person name="Drake A.F."/>
            <person name="Beavil R.L."/>
            <person name="Pruijn G.J."/>
            <person name="Brown P.R."/>
            <person name="Conte M.R."/>
        </authorList>
    </citation>
    <scope>SUBCELLULAR LOCATION</scope>
    <scope>SUBUNIT</scope>
</reference>
<reference key="9">
    <citation type="journal article" date="2010" name="Sci. Signal.">
        <title>Quantitative phosphoproteomics reveals widespread full phosphorylation site occupancy during mitosis.</title>
        <authorList>
            <person name="Olsen J.V."/>
            <person name="Vermeulen M."/>
            <person name="Santamaria A."/>
            <person name="Kumar C."/>
            <person name="Miller M.L."/>
            <person name="Jensen L.J."/>
            <person name="Gnad F."/>
            <person name="Cox J."/>
            <person name="Jensen T.S."/>
            <person name="Nigg E.A."/>
            <person name="Brunak S."/>
            <person name="Mann M."/>
        </authorList>
    </citation>
    <scope>PHOSPHORYLATION [LARGE SCALE ANALYSIS] AT SER-172 AND SER-182</scope>
    <scope>IDENTIFICATION BY MASS SPECTROMETRY [LARGE SCALE ANALYSIS]</scope>
    <source>
        <tissue>Cervix carcinoma</tissue>
    </source>
</reference>
<reference key="10">
    <citation type="journal article" date="2011" name="BMC Syst. Biol.">
        <title>Initial characterization of the human central proteome.</title>
        <authorList>
            <person name="Burkard T.R."/>
            <person name="Planyavsky M."/>
            <person name="Kaupe I."/>
            <person name="Breitwieser F.P."/>
            <person name="Buerckstuemmer T."/>
            <person name="Bennett K.L."/>
            <person name="Superti-Furga G."/>
            <person name="Colinge J."/>
        </authorList>
    </citation>
    <scope>IDENTIFICATION BY MASS SPECTROMETRY [LARGE SCALE ANALYSIS]</scope>
</reference>
<reference key="11">
    <citation type="journal article" date="2017" name="Genes Dev.">
        <title>Targeted CRISPR disruption reveals a role for RNase MRP RNA in human preribosomal RNA processing.</title>
        <authorList>
            <person name="Goldfarb K.C."/>
            <person name="Cech T.R."/>
        </authorList>
    </citation>
    <scope>FUNCTION</scope>
    <scope>SUBUNIT</scope>
</reference>
<reference evidence="10 11" key="12">
    <citation type="journal article" date="2018" name="Cell">
        <title>Cryo-EM Structure of the Human Ribonuclease P Holoenzyme.</title>
        <authorList>
            <person name="Wu J."/>
            <person name="Niu S."/>
            <person name="Tan M."/>
            <person name="Huang C."/>
            <person name="Li M."/>
            <person name="Song Y."/>
            <person name="Wang Q."/>
            <person name="Chen J."/>
            <person name="Shi S."/>
            <person name="Lan P."/>
            <person name="Lei M."/>
        </authorList>
    </citation>
    <scope>STRUCTURE BY ELECTRON MICROSCOPY (3.66 ANGSTROMS) OF RNASE P HOLOENZYME IN COMPLEX WITH TRNA</scope>
    <scope>FUNCTION</scope>
    <scope>SUBUNIT</scope>
</reference>
<reference evidence="12" key="13">
    <citation type="journal article" date="2018" name="J. Mol. Biol.">
        <title>Crystal Structure of Human Rpp20/Rpp25 Reveals Quaternary Level Adaptation of the Alba Scaffold as Structural Basis for Single-stranded RNA Binding.</title>
        <authorList>
            <person name="Chan C.W."/>
            <person name="Kiesel B.R."/>
            <person name="Mondragon A."/>
        </authorList>
    </citation>
    <scope>X-RAY CRYSTALLOGRAPHY (2.25 ANGSTROMS) IN COMPLEX WITH POP7</scope>
    <scope>SUBUNIT</scope>
    <scope>RNA-BINDING</scope>
</reference>
<evidence type="ECO:0000256" key="1">
    <source>
        <dbReference type="SAM" id="MobiDB-lite"/>
    </source>
</evidence>
<evidence type="ECO:0000269" key="2">
    <source>
    </source>
</evidence>
<evidence type="ECO:0000269" key="3">
    <source>
    </source>
</evidence>
<evidence type="ECO:0000269" key="4">
    <source>
    </source>
</evidence>
<evidence type="ECO:0000269" key="5">
    <source>
    </source>
</evidence>
<evidence type="ECO:0000269" key="6">
    <source>
    </source>
</evidence>
<evidence type="ECO:0000269" key="7">
    <source>
    </source>
</evidence>
<evidence type="ECO:0000269" key="8">
    <source>
    </source>
</evidence>
<evidence type="ECO:0000305" key="9"/>
<evidence type="ECO:0007744" key="10">
    <source>
        <dbReference type="PDB" id="6AHR"/>
    </source>
</evidence>
<evidence type="ECO:0007744" key="11">
    <source>
        <dbReference type="PDB" id="6AHU"/>
    </source>
</evidence>
<evidence type="ECO:0007744" key="12">
    <source>
        <dbReference type="PDB" id="6CWX"/>
    </source>
</evidence>
<evidence type="ECO:0007744" key="13">
    <source>
    </source>
</evidence>
<evidence type="ECO:0007744" key="14">
    <source>
    </source>
</evidence>
<evidence type="ECO:0007829" key="15">
    <source>
        <dbReference type="PDB" id="6CWX"/>
    </source>
</evidence>
<evidence type="ECO:0007829" key="16">
    <source>
        <dbReference type="PDB" id="6LT7"/>
    </source>
</evidence>
<protein>
    <recommendedName>
        <fullName>Ribonuclease P protein subunit p25</fullName>
        <shortName>RNase P protein subunit p25</shortName>
    </recommendedName>
</protein>
<proteinExistence type="evidence at protein level"/>
<gene>
    <name type="primary">RPP25</name>
</gene>
<comment type="function">
    <text evidence="2 4 6 8">Component of ribonuclease P, a ribonucleoprotein complex that generates mature tRNA molecules by cleaving their 5'-ends (PubMed:12003489, PubMed:16723659, PubMed:30454648). Also a component of the MRP ribonuclease complex, which cleaves pre-rRNA sequences (PubMed:28115465).</text>
</comment>
<comment type="subunit">
    <text evidence="2 3 4 5 6 7 8">Component of nuclear RNase P and RNase MRP ribonucleoproteins (PubMed:12003489, PubMed:15096576, PubMed:16723659, PubMed:20215441, PubMed:28115465, PubMed:30454648). RNase P consists of a catalytic RNA moiety and 10 different protein chains; POP1, POP4, POP5, POP7, RPP14, RPP21, RPP25, RPP30, RPP38 and RPP40 (PubMed:12003489, PubMed:16723659, PubMed:20215441, PubMed:30454648). Within the RNase P complex, POP1, POP7 and RPP25 form the 'finger' subcomplex, POP5, RPP14, RPP40 and homodimeric RPP30 form the 'palm' subcomplex, and RPP21, POP4 and RPP38 form the 'wrist' subcomplex. All subunits of the RNase P complex interact with the catalytic RNA (PubMed:30454648). Several subunits of RNase P are also part of the RNase MRP complex. RNase MRP consists of a catalytic RNA moiety and about 8 protein subunits; POP1, POP7, RPP25, RPP30, RPP38, RPP40 and possibly also POP4 and POP5 (PubMed:15096576, PubMed:16723659, PubMed:28115465). POP7 forms a heterodimer with RPP25 that binds to the P3 stem loop of the catalytic RNA (PubMed:20215441, PubMed:29625199).</text>
</comment>
<comment type="interaction">
    <interactant intactId="EBI-366570">
        <id>Q9BUL9</id>
    </interactant>
    <interactant intactId="EBI-11096309">
        <id>Q9NYB9-2</id>
        <label>ABI2</label>
    </interactant>
    <organismsDiffer>false</organismsDiffer>
    <experiments>3</experiments>
</comment>
<comment type="interaction">
    <interactant intactId="EBI-366570">
        <id>Q9BUL9</id>
    </interactant>
    <interactant intactId="EBI-1642333">
        <id>Q9BYV9</id>
        <label>BACH2</label>
    </interactant>
    <organismsDiffer>false</organismsDiffer>
    <experiments>3</experiments>
</comment>
<comment type="interaction">
    <interactant intactId="EBI-366570">
        <id>Q9BUL9</id>
    </interactant>
    <interactant intactId="EBI-11524452">
        <id>Q8N9N5-2</id>
        <label>BANP</label>
    </interactant>
    <organismsDiffer>false</organismsDiffer>
    <experiments>3</experiments>
</comment>
<comment type="interaction">
    <interactant intactId="EBI-366570">
        <id>Q9BUL9</id>
    </interactant>
    <interactant intactId="EBI-748248">
        <id>Q8WTU0</id>
        <label>DDI1</label>
    </interactant>
    <organismsDiffer>false</organismsDiffer>
    <experiments>3</experiments>
</comment>
<comment type="interaction">
    <interactant intactId="EBI-366570">
        <id>Q9BUL9</id>
    </interactant>
    <interactant intactId="EBI-1053164">
        <id>O75190</id>
        <label>DNAJB6</label>
    </interactant>
    <organismsDiffer>false</organismsDiffer>
    <experiments>3</experiments>
</comment>
<comment type="interaction">
    <interactant intactId="EBI-366570">
        <id>Q9BUL9</id>
    </interactant>
    <interactant intactId="EBI-750300">
        <id>Q01658</id>
        <label>DR1</label>
    </interactant>
    <organismsDiffer>false</organismsDiffer>
    <experiments>3</experiments>
</comment>
<comment type="interaction">
    <interactant intactId="EBI-366570">
        <id>Q9BUL9</id>
    </interactant>
    <interactant intactId="EBI-400434">
        <id>P35637</id>
        <label>FUS</label>
    </interactant>
    <organismsDiffer>false</organismsDiffer>
    <experiments>3</experiments>
</comment>
<comment type="interaction">
    <interactant intactId="EBI-366570">
        <id>Q9BUL9</id>
    </interactant>
    <interactant intactId="EBI-389564">
        <id>Q00403</id>
        <label>GTF2B</label>
    </interactant>
    <organismsDiffer>false</organismsDiffer>
    <experiments>3</experiments>
</comment>
<comment type="interaction">
    <interactant intactId="EBI-366570">
        <id>Q9BUL9</id>
    </interactant>
    <interactant intactId="EBI-1054873">
        <id>Q9Y5Q9</id>
        <label>GTF3C3</label>
    </interactant>
    <organismsDiffer>false</organismsDiffer>
    <experiments>3</experiments>
</comment>
<comment type="interaction">
    <interactant intactId="EBI-366570">
        <id>Q9BUL9</id>
    </interactant>
    <interactant intactId="EBI-739566">
        <id>P19012</id>
        <label>KRT15</label>
    </interactant>
    <organismsDiffer>false</organismsDiffer>
    <experiments>3</experiments>
</comment>
<comment type="interaction">
    <interactant intactId="EBI-366570">
        <id>Q9BUL9</id>
    </interactant>
    <interactant intactId="EBI-740738">
        <id>O95751</id>
        <label>LDOC1</label>
    </interactant>
    <organismsDiffer>false</organismsDiffer>
    <experiments>3</experiments>
</comment>
<comment type="interaction">
    <interactant intactId="EBI-366570">
        <id>Q9BUL9</id>
    </interactant>
    <interactant intactId="EBI-12003882">
        <id>Q5JTD7</id>
        <label>LRRC73</label>
    </interactant>
    <organismsDiffer>false</organismsDiffer>
    <experiments>3</experiments>
</comment>
<comment type="interaction">
    <interactant intactId="EBI-366570">
        <id>Q9BUL9</id>
    </interactant>
    <interactant intactId="EBI-5323863">
        <id>Q5S007</id>
        <label>LRRK2</label>
    </interactant>
    <organismsDiffer>false</organismsDiffer>
    <experiments>3</experiments>
</comment>
<comment type="interaction">
    <interactant intactId="EBI-366570">
        <id>Q9BUL9</id>
    </interactant>
    <interactant intactId="EBI-748974">
        <id>Q96CV9</id>
        <label>OPTN</label>
    </interactant>
    <organismsDiffer>false</organismsDiffer>
    <experiments>3</experiments>
</comment>
<comment type="interaction">
    <interactant intactId="EBI-366570">
        <id>Q9BUL9</id>
    </interactant>
    <interactant intactId="EBI-350517">
        <id>Q9NR12</id>
        <label>PDLIM7</label>
    </interactant>
    <organismsDiffer>false</organismsDiffer>
    <experiments>3</experiments>
</comment>
<comment type="interaction">
    <interactant intactId="EBI-366570">
        <id>Q9BUL9</id>
    </interactant>
    <interactant intactId="EBI-79165">
        <id>Q9NRD5</id>
        <label>PICK1</label>
    </interactant>
    <organismsDiffer>false</organismsDiffer>
    <experiments>3</experiments>
</comment>
<comment type="interaction">
    <interactant intactId="EBI-366570">
        <id>Q9BUL9</id>
    </interactant>
    <interactant intactId="EBI-302345">
        <id>Q8ND90</id>
        <label>PNMA1</label>
    </interactant>
    <organismsDiffer>false</organismsDiffer>
    <experiments>3</experiments>
</comment>
<comment type="interaction">
    <interactant intactId="EBI-366570">
        <id>Q9BUL9</id>
    </interactant>
    <interactant intactId="EBI-366741">
        <id>Q99575</id>
        <label>POP1</label>
    </interactant>
    <organismsDiffer>false</organismsDiffer>
    <experiments>4</experiments>
</comment>
<comment type="interaction">
    <interactant intactId="EBI-366570">
        <id>Q9BUL9</id>
    </interactant>
    <interactant intactId="EBI-366477">
        <id>O95707</id>
        <label>POP4</label>
    </interactant>
    <organismsDiffer>false</organismsDiffer>
    <experiments>5</experiments>
</comment>
<comment type="interaction">
    <interactant intactId="EBI-366570">
        <id>Q9BUL9</id>
    </interactant>
    <interactant intactId="EBI-366525">
        <id>Q969H6</id>
        <label>POP5</label>
    </interactant>
    <organismsDiffer>false</organismsDiffer>
    <experiments>4</experiments>
</comment>
<comment type="interaction">
    <interactant intactId="EBI-366570">
        <id>Q9BUL9</id>
    </interactant>
    <interactant intactId="EBI-366574">
        <id>O75817</id>
        <label>POP7</label>
    </interactant>
    <organismsDiffer>false</organismsDiffer>
    <experiments>10</experiments>
</comment>
<comment type="interaction">
    <interactant intactId="EBI-366570">
        <id>Q9BUL9</id>
    </interactant>
    <interactant intactId="EBI-740343">
        <id>Q93062-3</id>
        <label>RBPMS</label>
    </interactant>
    <organismsDiffer>false</organismsDiffer>
    <experiments>3</experiments>
</comment>
<comment type="interaction">
    <interactant intactId="EBI-366570">
        <id>Q9BUL9</id>
    </interactant>
    <interactant intactId="EBI-366542">
        <id>O95059</id>
        <label>RPP14</label>
    </interactant>
    <organismsDiffer>false</organismsDiffer>
    <experiments>4</experiments>
</comment>
<comment type="interaction">
    <interactant intactId="EBI-366570">
        <id>Q9BUL9</id>
    </interactant>
    <interactant intactId="EBI-711613">
        <id>P21673</id>
        <label>SAT1</label>
    </interactant>
    <organismsDiffer>false</organismsDiffer>
    <experiments>8</experiments>
</comment>
<comment type="interaction">
    <interactant intactId="EBI-366570">
        <id>Q9BUL9</id>
    </interactant>
    <interactant intactId="EBI-348469">
        <id>Q15427</id>
        <label>SF3B4</label>
    </interactant>
    <organismsDiffer>false</organismsDiffer>
    <experiments>3</experiments>
</comment>
<comment type="interaction">
    <interactant intactId="EBI-366570">
        <id>Q9BUL9</id>
    </interactant>
    <interactant intactId="EBI-990792">
        <id>P00441</id>
        <label>SOD1</label>
    </interactant>
    <organismsDiffer>false</organismsDiffer>
    <experiments>3</experiments>
</comment>
<comment type="interaction">
    <interactant intactId="EBI-366570">
        <id>Q9BUL9</id>
    </interactant>
    <interactant intactId="EBI-750109">
        <id>Q9NYB0</id>
        <label>TERF2IP</label>
    </interactant>
    <organismsDiffer>false</organismsDiffer>
    <experiments>2</experiments>
</comment>
<comment type="interaction">
    <interactant intactId="EBI-366570">
        <id>Q9BUL9</id>
    </interactant>
    <interactant intactId="EBI-11962468">
        <id>Q7Z4V0</id>
        <label>ZNF438</label>
    </interactant>
    <organismsDiffer>false</organismsDiffer>
    <experiments>3</experiments>
</comment>
<comment type="subcellular location">
    <subcellularLocation>
        <location evidence="2 5">Nucleus</location>
        <location evidence="2 5">Nucleolus</location>
    </subcellularLocation>
</comment>
<comment type="similarity">
    <text evidence="9">Belongs to the histone-like Alba family.</text>
</comment>
<sequence>MENFRKVRSEEAPAGCGAEGGGPGSGPFADLAPGAVHMRVKEGSKIRNLMAFATASMAQPATRAIVFSGCGRATTKTVTCAEILKRRLAGLHQVTRLRYRSVREVWQSLPPGPTQGQTPGEPAASLSVLKNVPGLAILLSKDALDPRQPGYQPPNPHPGPSSPPAAPASKRSLGEPAAGEGSAKRSQPEPGVADEDQTA</sequence>
<accession>Q9BUL9</accession>
<accession>D3DW70</accession>
<accession>Q9NX88</accession>
<keyword id="KW-0002">3D-structure</keyword>
<keyword id="KW-0539">Nucleus</keyword>
<keyword id="KW-0597">Phosphoprotein</keyword>
<keyword id="KW-1267">Proteomics identification</keyword>
<keyword id="KW-1185">Reference proteome</keyword>
<keyword id="KW-0694">RNA-binding</keyword>
<keyword id="KW-0698">rRNA processing</keyword>
<keyword id="KW-0819">tRNA processing</keyword>
<feature type="chain" id="PRO_0000237582" description="Ribonuclease P protein subunit p25">
    <location>
        <begin position="1"/>
        <end position="199"/>
    </location>
</feature>
<feature type="region of interest" description="Disordered" evidence="1">
    <location>
        <begin position="1"/>
        <end position="28"/>
    </location>
</feature>
<feature type="region of interest" description="Disordered" evidence="1">
    <location>
        <begin position="144"/>
        <end position="199"/>
    </location>
</feature>
<feature type="compositionally biased region" description="Basic and acidic residues" evidence="1">
    <location>
        <begin position="1"/>
        <end position="11"/>
    </location>
</feature>
<feature type="compositionally biased region" description="Pro residues" evidence="1">
    <location>
        <begin position="151"/>
        <end position="166"/>
    </location>
</feature>
<feature type="modified residue" description="Phosphoserine" evidence="13 14">
    <location>
        <position position="172"/>
    </location>
</feature>
<feature type="modified residue" description="Phosphoserine" evidence="14">
    <location>
        <position position="182"/>
    </location>
</feature>
<feature type="sequence conflict" description="In Ref. 2; BAA91128." evidence="9" ref="2">
    <original>A</original>
    <variation>V</variation>
    <location>
        <position position="73"/>
    </location>
</feature>
<feature type="strand" evidence="16">
    <location>
        <begin position="10"/>
        <end position="12"/>
    </location>
</feature>
<feature type="turn" evidence="15">
    <location>
        <begin position="27"/>
        <end position="31"/>
    </location>
</feature>
<feature type="strand" evidence="15">
    <location>
        <begin position="35"/>
        <end position="39"/>
    </location>
</feature>
<feature type="helix" evidence="15">
    <location>
        <begin position="46"/>
        <end position="58"/>
    </location>
</feature>
<feature type="strand" evidence="15">
    <location>
        <begin position="59"/>
        <end position="61"/>
    </location>
</feature>
<feature type="strand" evidence="15">
    <location>
        <begin position="64"/>
        <end position="70"/>
    </location>
</feature>
<feature type="helix" evidence="15">
    <location>
        <begin position="71"/>
        <end position="73"/>
    </location>
</feature>
<feature type="helix" evidence="15">
    <location>
        <begin position="74"/>
        <end position="87"/>
    </location>
</feature>
<feature type="strand" evidence="15">
    <location>
        <begin position="92"/>
        <end position="105"/>
    </location>
</feature>
<feature type="strand" evidence="15">
    <location>
        <begin position="127"/>
        <end position="142"/>
    </location>
</feature>